<accession>Q6BET5</accession>
<proteinExistence type="evidence at protein level"/>
<sequence>MNVITPPFADGVDPKPVCIVADDIFETMTARRKIHFSIYVIFKKNVELAEPFKLLYYTEKKNVAHLDGSVAQDFGLPMWTKDDGQRAPDLSRQKNDYIKLDFFTNINNPEDGFSYCWTDCISTKNTTMVPRQLMPPSKRSMKLYLILPVEESNIMVLSEKAYGSLQLMKKHRKMGQPPQRVGCYINFNCQTSKVMFGCGHVYCEQCLNSWNDKPCSVCLKPVTSEPTQLKLRQGPCPFDLCSPNSSTMGIVLIPCGCHVMCQNLEDAYERNKHHLEPLIEKIKYCPFEPCRIRVRKLKKPFWHQQDKEHTLEMNSA</sequence>
<evidence type="ECO:0000255" key="1">
    <source>
        <dbReference type="PROSITE-ProRule" id="PRU00175"/>
    </source>
</evidence>
<evidence type="ECO:0000269" key="2">
    <source>
    </source>
</evidence>
<evidence type="ECO:0000269" key="3">
    <source>
    </source>
</evidence>
<evidence type="ECO:0000305" key="4"/>
<evidence type="ECO:0000312" key="5">
    <source>
        <dbReference type="Proteomes" id="UP000001940"/>
    </source>
</evidence>
<evidence type="ECO:0000312" key="6">
    <source>
        <dbReference type="WormBase" id="B0564.11"/>
    </source>
</evidence>
<reference evidence="5" key="1">
    <citation type="journal article" date="1998" name="Science">
        <title>Genome sequence of the nematode C. elegans: a platform for investigating biology.</title>
        <authorList>
            <consortium name="The C. elegans sequencing consortium"/>
        </authorList>
    </citation>
    <scope>NUCLEOTIDE SEQUENCE [LARGE SCALE GENOMIC DNA]</scope>
    <source>
        <strain evidence="5">Bristol N2</strain>
    </source>
</reference>
<reference evidence="4" key="2">
    <citation type="journal article" date="2012" name="Curr. Biol.">
        <title>The Caenorhabditis elegans RDE-10/RDE-11 complex regulates RNAi by promoting secondary siRNA amplification.</title>
        <authorList>
            <person name="Zhang C."/>
            <person name="Montgomery T.A."/>
            <person name="Fischer S.E."/>
            <person name="Garcia S.M."/>
            <person name="Riedel C.G."/>
            <person name="Fahlgren N."/>
            <person name="Sullivan C.M."/>
            <person name="Carrington J.C."/>
            <person name="Ruvkun G."/>
        </authorList>
    </citation>
    <scope>FUNCTION</scope>
    <scope>INTERACTION WITH RDE-10</scope>
    <scope>DISRUPTION PHENOTYPE</scope>
    <scope>IDENTIFICATION BY MASS SPECTROMETRY</scope>
</reference>
<reference evidence="4" key="3">
    <citation type="journal article" date="2012" name="Genes Dev.">
        <title>The RDE-10/RDE-11 complex triggers RNAi-induced mRNA degradation by association with target mRNA in C. elegans.</title>
        <authorList>
            <person name="Yang H."/>
            <person name="Zhang Y."/>
            <person name="Vallandingham J."/>
            <person name="Li H."/>
            <person name="Li H."/>
            <person name="Florens L."/>
            <person name="Mak H.Y."/>
        </authorList>
    </citation>
    <scope>FUNCTION</scope>
    <scope>INTERACTION WITH RDE-10</scope>
    <scope>MUTAGENESIS OF CYS-203</scope>
</reference>
<comment type="function">
    <text evidence="2 3">In complex with rde-10, required in the endogenous and exogenous siRNA pathway for biogenesis and accumulation of secondary small interfering RNA (siRNA) intermediates, such as 22G-siRNAs derived from ergo-1 targets.</text>
</comment>
<comment type="subunit">
    <text evidence="2 3">Interacts (via RING-type zinc finger domain) with rde-10.</text>
</comment>
<comment type="disruption phenotype">
    <text evidence="3">Insensitive to RNAi-mediated gene silencing.</text>
</comment>
<keyword id="KW-0479">Metal-binding</keyword>
<keyword id="KW-1185">Reference proteome</keyword>
<keyword id="KW-0678">Repressor</keyword>
<keyword id="KW-0943">RNA-mediated gene silencing</keyword>
<keyword id="KW-0810">Translation regulation</keyword>
<keyword id="KW-0862">Zinc</keyword>
<keyword id="KW-0863">Zinc-finger</keyword>
<organism evidence="5">
    <name type="scientific">Caenorhabditis elegans</name>
    <dbReference type="NCBI Taxonomy" id="6239"/>
    <lineage>
        <taxon>Eukaryota</taxon>
        <taxon>Metazoa</taxon>
        <taxon>Ecdysozoa</taxon>
        <taxon>Nematoda</taxon>
        <taxon>Chromadorea</taxon>
        <taxon>Rhabditida</taxon>
        <taxon>Rhabditina</taxon>
        <taxon>Rhabditomorpha</taxon>
        <taxon>Rhabditoidea</taxon>
        <taxon>Rhabditidae</taxon>
        <taxon>Peloderinae</taxon>
        <taxon>Caenorhabditis</taxon>
    </lineage>
</organism>
<feature type="chain" id="PRO_0000434616" description="RNA interference defective protein 11" evidence="4">
    <location>
        <begin position="1"/>
        <end position="316"/>
    </location>
</feature>
<feature type="zinc finger region" description="RING-type; degenerate" evidence="1">
    <location>
        <begin position="183"/>
        <end position="218"/>
    </location>
</feature>
<feature type="mutagenesis site" description="Impaired interaction with rde-10." evidence="2">
    <original>C</original>
    <variation>S</variation>
    <location>
        <position position="203"/>
    </location>
</feature>
<dbReference type="EMBL" id="BX284604">
    <property type="protein sequence ID" value="CAH04641.1"/>
    <property type="molecule type" value="Genomic_DNA"/>
</dbReference>
<dbReference type="RefSeq" id="NP_001021278.1">
    <property type="nucleotide sequence ID" value="NM_001026107.7"/>
</dbReference>
<dbReference type="ComplexPortal" id="CPX-1000">
    <property type="entry name" value="Rde-10/Rde-11 complex"/>
</dbReference>
<dbReference type="FunCoup" id="Q6BET5">
    <property type="interactions" value="152"/>
</dbReference>
<dbReference type="STRING" id="6239.B0564.11.1"/>
<dbReference type="PaxDb" id="6239-B0564.11.2"/>
<dbReference type="PeptideAtlas" id="Q6BET5"/>
<dbReference type="EnsemblMetazoa" id="B0564.11.1">
    <property type="protein sequence ID" value="B0564.11.1"/>
    <property type="gene ID" value="WBGene00023421"/>
</dbReference>
<dbReference type="EnsemblMetazoa" id="B0564.11.2">
    <property type="protein sequence ID" value="B0564.11.2"/>
    <property type="gene ID" value="WBGene00023421"/>
</dbReference>
<dbReference type="GeneID" id="3565977"/>
<dbReference type="KEGG" id="cel:CELE_B0564.11"/>
<dbReference type="UCSC" id="B0564.11">
    <property type="organism name" value="c. elegans"/>
</dbReference>
<dbReference type="AGR" id="WB:WBGene00023421"/>
<dbReference type="CTD" id="3565977"/>
<dbReference type="WormBase" id="B0564.11">
    <property type="protein sequence ID" value="CE36970"/>
    <property type="gene ID" value="WBGene00023421"/>
    <property type="gene designation" value="rde-11"/>
</dbReference>
<dbReference type="eggNOG" id="ENOG502TI3I">
    <property type="taxonomic scope" value="Eukaryota"/>
</dbReference>
<dbReference type="GeneTree" id="ENSGT00390000008228"/>
<dbReference type="HOGENOM" id="CLU_937639_0_0_1"/>
<dbReference type="InParanoid" id="Q6BET5"/>
<dbReference type="OrthoDB" id="5872047at2759"/>
<dbReference type="PRO" id="PR:Q6BET5"/>
<dbReference type="Proteomes" id="UP000001940">
    <property type="component" value="Chromosome IV"/>
</dbReference>
<dbReference type="Bgee" id="WBGene00023421">
    <property type="expression patterns" value="Expressed in germ line (C elegans) and 4 other cell types or tissues"/>
</dbReference>
<dbReference type="GO" id="GO:0031332">
    <property type="term" value="C:RNAi effector complex"/>
    <property type="evidence" value="ECO:0000303"/>
    <property type="project" value="ComplexPortal"/>
</dbReference>
<dbReference type="GO" id="GO:0008270">
    <property type="term" value="F:zinc ion binding"/>
    <property type="evidence" value="ECO:0007669"/>
    <property type="project" value="UniProtKB-KW"/>
</dbReference>
<dbReference type="GO" id="GO:0006417">
    <property type="term" value="P:regulation of translation"/>
    <property type="evidence" value="ECO:0007669"/>
    <property type="project" value="UniProtKB-KW"/>
</dbReference>
<dbReference type="GO" id="GO:0031047">
    <property type="term" value="P:regulatory ncRNA-mediated gene silencing"/>
    <property type="evidence" value="ECO:0007669"/>
    <property type="project" value="UniProtKB-KW"/>
</dbReference>
<dbReference type="Gene3D" id="3.30.40.10">
    <property type="entry name" value="Zinc/RING finger domain, C3HC4 (zinc finger)"/>
    <property type="match status" value="1"/>
</dbReference>
<dbReference type="InterPro" id="IPR001841">
    <property type="entry name" value="Znf_RING"/>
</dbReference>
<dbReference type="InterPro" id="IPR013083">
    <property type="entry name" value="Znf_RING/FYVE/PHD"/>
</dbReference>
<dbReference type="InterPro" id="IPR017907">
    <property type="entry name" value="Znf_RING_CS"/>
</dbReference>
<dbReference type="SUPFAM" id="SSF57850">
    <property type="entry name" value="RING/U-box"/>
    <property type="match status" value="1"/>
</dbReference>
<dbReference type="PROSITE" id="PS00518">
    <property type="entry name" value="ZF_RING_1"/>
    <property type="match status" value="1"/>
</dbReference>
<dbReference type="PROSITE" id="PS50089">
    <property type="entry name" value="ZF_RING_2"/>
    <property type="match status" value="1"/>
</dbReference>
<dbReference type="PROSITE" id="PS00028">
    <property type="entry name" value="ZINC_FINGER_C2H2_1"/>
    <property type="match status" value="1"/>
</dbReference>
<gene>
    <name evidence="6" type="primary">rde-11</name>
    <name evidence="6" type="ORF">B0564.11</name>
</gene>
<protein>
    <recommendedName>
        <fullName evidence="6">RNA interference defective protein 11</fullName>
    </recommendedName>
</protein>
<name>RDE11_CAEEL</name>